<gene>
    <name evidence="1" type="primary">rlmB</name>
    <name type="ordered locus">PSPTO_4934</name>
</gene>
<name>RLMB_PSESM</name>
<keyword id="KW-0963">Cytoplasm</keyword>
<keyword id="KW-0489">Methyltransferase</keyword>
<keyword id="KW-1185">Reference proteome</keyword>
<keyword id="KW-0698">rRNA processing</keyword>
<keyword id="KW-0949">S-adenosyl-L-methionine</keyword>
<keyword id="KW-0808">Transferase</keyword>
<sequence length="250" mass="27065">MSQLEKIYGVHAVEALLRHHPKRVKHIWLAEGRNDPRVQTLVALASENRVTIGQAERREMDAWVEGVHQGVVADVSPSQVWGEAMLDELLDRSEGPPLLLVLDGVTDPHNLGACLRTADAAGALAVIVPKDKSATLTPAVRKVACGAAEVIPLVAVTNLARTLEKLQQRGLWVVGTAGEAEVELYQQDLTGPTIIIMGAEGKGMRRLTREHCDYLVRLPMAGSVSSLNVSVATGVCLFEALRQRSAKRKP</sequence>
<evidence type="ECO:0000255" key="1">
    <source>
        <dbReference type="HAMAP-Rule" id="MF_01887"/>
    </source>
</evidence>
<dbReference type="EC" id="2.1.1.185" evidence="1"/>
<dbReference type="EMBL" id="AE016853">
    <property type="protein sequence ID" value="AAO58362.1"/>
    <property type="molecule type" value="Genomic_DNA"/>
</dbReference>
<dbReference type="RefSeq" id="NP_794667.1">
    <property type="nucleotide sequence ID" value="NC_004578.1"/>
</dbReference>
<dbReference type="RefSeq" id="WP_005620859.1">
    <property type="nucleotide sequence ID" value="NC_004578.1"/>
</dbReference>
<dbReference type="SMR" id="Q87VK2"/>
<dbReference type="STRING" id="223283.PSPTO_4934"/>
<dbReference type="GeneID" id="1186617"/>
<dbReference type="KEGG" id="pst:PSPTO_4934"/>
<dbReference type="PATRIC" id="fig|223283.9.peg.5048"/>
<dbReference type="eggNOG" id="COG0566">
    <property type="taxonomic scope" value="Bacteria"/>
</dbReference>
<dbReference type="HOGENOM" id="CLU_021322_0_1_6"/>
<dbReference type="OrthoDB" id="9785673at2"/>
<dbReference type="PhylomeDB" id="Q87VK2"/>
<dbReference type="Proteomes" id="UP000002515">
    <property type="component" value="Chromosome"/>
</dbReference>
<dbReference type="GO" id="GO:0005829">
    <property type="term" value="C:cytosol"/>
    <property type="evidence" value="ECO:0007669"/>
    <property type="project" value="TreeGrafter"/>
</dbReference>
<dbReference type="GO" id="GO:0003723">
    <property type="term" value="F:RNA binding"/>
    <property type="evidence" value="ECO:0007669"/>
    <property type="project" value="InterPro"/>
</dbReference>
<dbReference type="GO" id="GO:0070039">
    <property type="term" value="F:rRNA (guanosine-2'-O-)-methyltransferase activity"/>
    <property type="evidence" value="ECO:0007669"/>
    <property type="project" value="UniProtKB-UniRule"/>
</dbReference>
<dbReference type="CDD" id="cd18103">
    <property type="entry name" value="SpoU-like_RlmB"/>
    <property type="match status" value="1"/>
</dbReference>
<dbReference type="FunFam" id="3.40.1280.10:FF:000008">
    <property type="entry name" value="Group 3 RNA methyltransferase TrmH"/>
    <property type="match status" value="1"/>
</dbReference>
<dbReference type="Gene3D" id="3.30.1330.30">
    <property type="match status" value="1"/>
</dbReference>
<dbReference type="Gene3D" id="3.40.1280.10">
    <property type="match status" value="1"/>
</dbReference>
<dbReference type="HAMAP" id="MF_01887">
    <property type="entry name" value="23SrRNA_methyltr_B"/>
    <property type="match status" value="1"/>
</dbReference>
<dbReference type="InterPro" id="IPR024915">
    <property type="entry name" value="23S_rRNA_MeTrfase_RlmB"/>
</dbReference>
<dbReference type="InterPro" id="IPR029028">
    <property type="entry name" value="Alpha/beta_knot_MTases"/>
</dbReference>
<dbReference type="InterPro" id="IPR029064">
    <property type="entry name" value="Ribosomal_eL30-like_sf"/>
</dbReference>
<dbReference type="InterPro" id="IPR004441">
    <property type="entry name" value="rRNA_MeTrfase_TrmH"/>
</dbReference>
<dbReference type="InterPro" id="IPR001537">
    <property type="entry name" value="SpoU_MeTrfase"/>
</dbReference>
<dbReference type="InterPro" id="IPR013123">
    <property type="entry name" value="SpoU_subst-bd"/>
</dbReference>
<dbReference type="InterPro" id="IPR029026">
    <property type="entry name" value="tRNA_m1G_MTases_N"/>
</dbReference>
<dbReference type="NCBIfam" id="TIGR00186">
    <property type="entry name" value="rRNA_methyl_3"/>
    <property type="match status" value="1"/>
</dbReference>
<dbReference type="PANTHER" id="PTHR46429">
    <property type="entry name" value="23S RRNA (GUANOSINE-2'-O-)-METHYLTRANSFERASE RLMB"/>
    <property type="match status" value="1"/>
</dbReference>
<dbReference type="PANTHER" id="PTHR46429:SF1">
    <property type="entry name" value="23S RRNA (GUANOSINE-2'-O-)-METHYLTRANSFERASE RLMB"/>
    <property type="match status" value="1"/>
</dbReference>
<dbReference type="Pfam" id="PF00588">
    <property type="entry name" value="SpoU_methylase"/>
    <property type="match status" value="1"/>
</dbReference>
<dbReference type="Pfam" id="PF08032">
    <property type="entry name" value="SpoU_sub_bind"/>
    <property type="match status" value="1"/>
</dbReference>
<dbReference type="SMART" id="SM00967">
    <property type="entry name" value="SpoU_sub_bind"/>
    <property type="match status" value="1"/>
</dbReference>
<dbReference type="SUPFAM" id="SSF75217">
    <property type="entry name" value="alpha/beta knot"/>
    <property type="match status" value="1"/>
</dbReference>
<dbReference type="SUPFAM" id="SSF55315">
    <property type="entry name" value="L30e-like"/>
    <property type="match status" value="1"/>
</dbReference>
<accession>Q87VK2</accession>
<proteinExistence type="inferred from homology"/>
<organism>
    <name type="scientific">Pseudomonas syringae pv. tomato (strain ATCC BAA-871 / DC3000)</name>
    <dbReference type="NCBI Taxonomy" id="223283"/>
    <lineage>
        <taxon>Bacteria</taxon>
        <taxon>Pseudomonadati</taxon>
        <taxon>Pseudomonadota</taxon>
        <taxon>Gammaproteobacteria</taxon>
        <taxon>Pseudomonadales</taxon>
        <taxon>Pseudomonadaceae</taxon>
        <taxon>Pseudomonas</taxon>
    </lineage>
</organism>
<protein>
    <recommendedName>
        <fullName evidence="1">23S rRNA (guanosine-2'-O-)-methyltransferase RlmB</fullName>
        <ecNumber evidence="1">2.1.1.185</ecNumber>
    </recommendedName>
    <alternativeName>
        <fullName evidence="1">23S rRNA (guanosine2251 2'-O)-methyltransferase</fullName>
    </alternativeName>
    <alternativeName>
        <fullName evidence="1">23S rRNA Gm2251 2'-O-methyltransferase</fullName>
    </alternativeName>
</protein>
<feature type="chain" id="PRO_0000159799" description="23S rRNA (guanosine-2'-O-)-methyltransferase RlmB">
    <location>
        <begin position="1"/>
        <end position="250"/>
    </location>
</feature>
<feature type="binding site" evidence="1">
    <location>
        <position position="198"/>
    </location>
    <ligand>
        <name>S-adenosyl-L-methionine</name>
        <dbReference type="ChEBI" id="CHEBI:59789"/>
    </ligand>
</feature>
<feature type="binding site" evidence="1">
    <location>
        <position position="218"/>
    </location>
    <ligand>
        <name>S-adenosyl-L-methionine</name>
        <dbReference type="ChEBI" id="CHEBI:59789"/>
    </ligand>
</feature>
<feature type="binding site" evidence="1">
    <location>
        <position position="227"/>
    </location>
    <ligand>
        <name>S-adenosyl-L-methionine</name>
        <dbReference type="ChEBI" id="CHEBI:59789"/>
    </ligand>
</feature>
<comment type="function">
    <text evidence="1">Specifically methylates the ribose of guanosine 2251 in 23S rRNA.</text>
</comment>
<comment type="catalytic activity">
    <reaction evidence="1">
        <text>guanosine(2251) in 23S rRNA + S-adenosyl-L-methionine = 2'-O-methylguanosine(2251) in 23S rRNA + S-adenosyl-L-homocysteine + H(+)</text>
        <dbReference type="Rhea" id="RHEA:24140"/>
        <dbReference type="Rhea" id="RHEA-COMP:10239"/>
        <dbReference type="Rhea" id="RHEA-COMP:10241"/>
        <dbReference type="ChEBI" id="CHEBI:15378"/>
        <dbReference type="ChEBI" id="CHEBI:57856"/>
        <dbReference type="ChEBI" id="CHEBI:59789"/>
        <dbReference type="ChEBI" id="CHEBI:74269"/>
        <dbReference type="ChEBI" id="CHEBI:74445"/>
        <dbReference type="EC" id="2.1.1.185"/>
    </reaction>
</comment>
<comment type="subcellular location">
    <subcellularLocation>
        <location evidence="1">Cytoplasm</location>
    </subcellularLocation>
</comment>
<comment type="similarity">
    <text evidence="1">Belongs to the class IV-like SAM-binding methyltransferase superfamily. RNA methyltransferase TrmH family. RlmB subfamily.</text>
</comment>
<reference key="1">
    <citation type="journal article" date="2003" name="Proc. Natl. Acad. Sci. U.S.A.">
        <title>The complete genome sequence of the Arabidopsis and tomato pathogen Pseudomonas syringae pv. tomato DC3000.</title>
        <authorList>
            <person name="Buell C.R."/>
            <person name="Joardar V."/>
            <person name="Lindeberg M."/>
            <person name="Selengut J."/>
            <person name="Paulsen I.T."/>
            <person name="Gwinn M.L."/>
            <person name="Dodson R.J."/>
            <person name="DeBoy R.T."/>
            <person name="Durkin A.S."/>
            <person name="Kolonay J.F."/>
            <person name="Madupu R."/>
            <person name="Daugherty S.C."/>
            <person name="Brinkac L.M."/>
            <person name="Beanan M.J."/>
            <person name="Haft D.H."/>
            <person name="Nelson W.C."/>
            <person name="Davidsen T.M."/>
            <person name="Zafar N."/>
            <person name="Zhou L."/>
            <person name="Liu J."/>
            <person name="Yuan Q."/>
            <person name="Khouri H.M."/>
            <person name="Fedorova N.B."/>
            <person name="Tran B."/>
            <person name="Russell D."/>
            <person name="Berry K.J."/>
            <person name="Utterback T.R."/>
            <person name="Van Aken S.E."/>
            <person name="Feldblyum T.V."/>
            <person name="D'Ascenzo M."/>
            <person name="Deng W.-L."/>
            <person name="Ramos A.R."/>
            <person name="Alfano J.R."/>
            <person name="Cartinhour S."/>
            <person name="Chatterjee A.K."/>
            <person name="Delaney T.P."/>
            <person name="Lazarowitz S.G."/>
            <person name="Martin G.B."/>
            <person name="Schneider D.J."/>
            <person name="Tang X."/>
            <person name="Bender C.L."/>
            <person name="White O."/>
            <person name="Fraser C.M."/>
            <person name="Collmer A."/>
        </authorList>
    </citation>
    <scope>NUCLEOTIDE SEQUENCE [LARGE SCALE GENOMIC DNA]</scope>
    <source>
        <strain>ATCC BAA-871 / DC3000</strain>
    </source>
</reference>